<dbReference type="EMBL" id="CP000255">
    <property type="protein sequence ID" value="ABD20584.1"/>
    <property type="molecule type" value="Genomic_DNA"/>
</dbReference>
<dbReference type="SMR" id="Q2FG63"/>
<dbReference type="KEGG" id="saa:SAUSA300_1620"/>
<dbReference type="HOGENOM" id="CLU_033732_3_0_9"/>
<dbReference type="OMA" id="AKVDQCP"/>
<dbReference type="Proteomes" id="UP000001939">
    <property type="component" value="Chromosome"/>
</dbReference>
<dbReference type="GO" id="GO:0005829">
    <property type="term" value="C:cytosol"/>
    <property type="evidence" value="ECO:0007669"/>
    <property type="project" value="TreeGrafter"/>
</dbReference>
<dbReference type="GO" id="GO:0005525">
    <property type="term" value="F:GTP binding"/>
    <property type="evidence" value="ECO:0007669"/>
    <property type="project" value="UniProtKB-UniRule"/>
</dbReference>
<dbReference type="GO" id="GO:0046872">
    <property type="term" value="F:metal ion binding"/>
    <property type="evidence" value="ECO:0007669"/>
    <property type="project" value="UniProtKB-KW"/>
</dbReference>
<dbReference type="GO" id="GO:0000917">
    <property type="term" value="P:division septum assembly"/>
    <property type="evidence" value="ECO:0007669"/>
    <property type="project" value="UniProtKB-KW"/>
</dbReference>
<dbReference type="CDD" id="cd01876">
    <property type="entry name" value="YihA_EngB"/>
    <property type="match status" value="1"/>
</dbReference>
<dbReference type="FunFam" id="3.40.50.300:FF:000098">
    <property type="entry name" value="Probable GTP-binding protein EngB"/>
    <property type="match status" value="1"/>
</dbReference>
<dbReference type="Gene3D" id="3.40.50.300">
    <property type="entry name" value="P-loop containing nucleotide triphosphate hydrolases"/>
    <property type="match status" value="1"/>
</dbReference>
<dbReference type="HAMAP" id="MF_00321">
    <property type="entry name" value="GTPase_EngB"/>
    <property type="match status" value="1"/>
</dbReference>
<dbReference type="InterPro" id="IPR030393">
    <property type="entry name" value="G_ENGB_dom"/>
</dbReference>
<dbReference type="InterPro" id="IPR006073">
    <property type="entry name" value="GTP-bd"/>
</dbReference>
<dbReference type="InterPro" id="IPR019987">
    <property type="entry name" value="GTP-bd_ribosome_bio_YsxC"/>
</dbReference>
<dbReference type="InterPro" id="IPR027417">
    <property type="entry name" value="P-loop_NTPase"/>
</dbReference>
<dbReference type="NCBIfam" id="TIGR03598">
    <property type="entry name" value="GTPase_YsxC"/>
    <property type="match status" value="1"/>
</dbReference>
<dbReference type="PANTHER" id="PTHR11649:SF13">
    <property type="entry name" value="ENGB-TYPE G DOMAIN-CONTAINING PROTEIN"/>
    <property type="match status" value="1"/>
</dbReference>
<dbReference type="PANTHER" id="PTHR11649">
    <property type="entry name" value="MSS1/TRME-RELATED GTP-BINDING PROTEIN"/>
    <property type="match status" value="1"/>
</dbReference>
<dbReference type="Pfam" id="PF01926">
    <property type="entry name" value="MMR_HSR1"/>
    <property type="match status" value="1"/>
</dbReference>
<dbReference type="SUPFAM" id="SSF52540">
    <property type="entry name" value="P-loop containing nucleoside triphosphate hydrolases"/>
    <property type="match status" value="1"/>
</dbReference>
<dbReference type="PROSITE" id="PS51706">
    <property type="entry name" value="G_ENGB"/>
    <property type="match status" value="1"/>
</dbReference>
<comment type="function">
    <text evidence="1">Necessary for normal cell division and for the maintenance of normal septation.</text>
</comment>
<comment type="cofactor">
    <cofactor evidence="1">
        <name>Mg(2+)</name>
        <dbReference type="ChEBI" id="CHEBI:18420"/>
    </cofactor>
</comment>
<comment type="similarity">
    <text evidence="1">Belongs to the TRAFAC class TrmE-Era-EngA-EngB-Septin-like GTPase superfamily. EngB GTPase family.</text>
</comment>
<sequence length="196" mass="22685">MKVNPNNIELIISAVKEEQYPETELSEVALSGRSNVGKSTFINSMIGRKNMARTSQQPGKTQTLNFYNIDEQLIFVDVPGYGYAKVSKTQREKFGKMIEEYITKRENLQLVIQLVDLRHDPTQDDILMYNYLKHFDIPTLVICTKEDKIPKGKVQKHIKNIKTQLDMDPDDTIVSYSSIQNNKQQQIWNLIEPYIS</sequence>
<accession>Q2FG63</accession>
<evidence type="ECO:0000255" key="1">
    <source>
        <dbReference type="HAMAP-Rule" id="MF_00321"/>
    </source>
</evidence>
<reference key="1">
    <citation type="journal article" date="2006" name="Lancet">
        <title>Complete genome sequence of USA300, an epidemic clone of community-acquired meticillin-resistant Staphylococcus aureus.</title>
        <authorList>
            <person name="Diep B.A."/>
            <person name="Gill S.R."/>
            <person name="Chang R.F."/>
            <person name="Phan T.H."/>
            <person name="Chen J.H."/>
            <person name="Davidson M.G."/>
            <person name="Lin F."/>
            <person name="Lin J."/>
            <person name="Carleton H.A."/>
            <person name="Mongodin E.F."/>
            <person name="Sensabaugh G.F."/>
            <person name="Perdreau-Remington F."/>
        </authorList>
    </citation>
    <scope>NUCLEOTIDE SEQUENCE [LARGE SCALE GENOMIC DNA]</scope>
    <source>
        <strain>USA300</strain>
    </source>
</reference>
<protein>
    <recommendedName>
        <fullName evidence="1">Probable GTP-binding protein EngB</fullName>
    </recommendedName>
</protein>
<name>ENGB_STAA3</name>
<keyword id="KW-0131">Cell cycle</keyword>
<keyword id="KW-0132">Cell division</keyword>
<keyword id="KW-0342">GTP-binding</keyword>
<keyword id="KW-0460">Magnesium</keyword>
<keyword id="KW-0479">Metal-binding</keyword>
<keyword id="KW-0547">Nucleotide-binding</keyword>
<keyword id="KW-0717">Septation</keyword>
<feature type="chain" id="PRO_0000266957" description="Probable GTP-binding protein EngB">
    <location>
        <begin position="1"/>
        <end position="196"/>
    </location>
</feature>
<feature type="domain" description="EngB-type G" evidence="1">
    <location>
        <begin position="24"/>
        <end position="196"/>
    </location>
</feature>
<feature type="binding site" evidence="1">
    <location>
        <begin position="32"/>
        <end position="39"/>
    </location>
    <ligand>
        <name>GTP</name>
        <dbReference type="ChEBI" id="CHEBI:37565"/>
    </ligand>
</feature>
<feature type="binding site" evidence="1">
    <location>
        <position position="39"/>
    </location>
    <ligand>
        <name>Mg(2+)</name>
        <dbReference type="ChEBI" id="CHEBI:18420"/>
    </ligand>
</feature>
<feature type="binding site" evidence="1">
    <location>
        <begin position="59"/>
        <end position="63"/>
    </location>
    <ligand>
        <name>GTP</name>
        <dbReference type="ChEBI" id="CHEBI:37565"/>
    </ligand>
</feature>
<feature type="binding site" evidence="1">
    <location>
        <position position="61"/>
    </location>
    <ligand>
        <name>Mg(2+)</name>
        <dbReference type="ChEBI" id="CHEBI:18420"/>
    </ligand>
</feature>
<feature type="binding site" evidence="1">
    <location>
        <begin position="77"/>
        <end position="80"/>
    </location>
    <ligand>
        <name>GTP</name>
        <dbReference type="ChEBI" id="CHEBI:37565"/>
    </ligand>
</feature>
<feature type="binding site" evidence="1">
    <location>
        <begin position="144"/>
        <end position="147"/>
    </location>
    <ligand>
        <name>GTP</name>
        <dbReference type="ChEBI" id="CHEBI:37565"/>
    </ligand>
</feature>
<feature type="binding site" evidence="1">
    <location>
        <begin position="176"/>
        <end position="178"/>
    </location>
    <ligand>
        <name>GTP</name>
        <dbReference type="ChEBI" id="CHEBI:37565"/>
    </ligand>
</feature>
<proteinExistence type="inferred from homology"/>
<organism>
    <name type="scientific">Staphylococcus aureus (strain USA300)</name>
    <dbReference type="NCBI Taxonomy" id="367830"/>
    <lineage>
        <taxon>Bacteria</taxon>
        <taxon>Bacillati</taxon>
        <taxon>Bacillota</taxon>
        <taxon>Bacilli</taxon>
        <taxon>Bacillales</taxon>
        <taxon>Staphylococcaceae</taxon>
        <taxon>Staphylococcus</taxon>
    </lineage>
</organism>
<gene>
    <name evidence="1" type="primary">engB</name>
    <name type="ordered locus">SAUSA300_1620</name>
</gene>